<accession>Q87D46</accession>
<feature type="chain" id="PRO_0000072886" description="Glycine--tRNA ligase alpha subunit">
    <location>
        <begin position="1"/>
        <end position="307"/>
    </location>
</feature>
<name>SYGA_XYLFT</name>
<keyword id="KW-0030">Aminoacyl-tRNA synthetase</keyword>
<keyword id="KW-0067">ATP-binding</keyword>
<keyword id="KW-0963">Cytoplasm</keyword>
<keyword id="KW-0436">Ligase</keyword>
<keyword id="KW-0547">Nucleotide-binding</keyword>
<keyword id="KW-0648">Protein biosynthesis</keyword>
<keyword id="KW-1185">Reference proteome</keyword>
<evidence type="ECO:0000255" key="1">
    <source>
        <dbReference type="HAMAP-Rule" id="MF_00254"/>
    </source>
</evidence>
<sequence length="307" mass="35064">MSDSRGVLSISTSTTFQGLIQTLNRYWAEQGCVLVQPLDLEVGAGTFHPATFLRALGPEPWNAAYVQPSRRPTDGRYGENPNRLQRYYQYQVAMKPNPDNLQELYLASLQALGIDPLVHDVRFVEDNWESPTLGAWGLGWEVWLNGMEVTQFTYFQQAGGLECKPVLGEVTYGLERLCMYLQSCDNVYDLVWTYGPDGTPVTYGDVYHQNEVEQSAYNFEHANVTELLHTFDACEREAKSLVEAVLPLPAYEKVIKASHCFNLLDARRTISVTERQRYILRIRTLSQEVAKAYYAQREKLGFPNLRR</sequence>
<organism>
    <name type="scientific">Xylella fastidiosa (strain Temecula1 / ATCC 700964)</name>
    <dbReference type="NCBI Taxonomy" id="183190"/>
    <lineage>
        <taxon>Bacteria</taxon>
        <taxon>Pseudomonadati</taxon>
        <taxon>Pseudomonadota</taxon>
        <taxon>Gammaproteobacteria</taxon>
        <taxon>Lysobacterales</taxon>
        <taxon>Lysobacteraceae</taxon>
        <taxon>Xylella</taxon>
    </lineage>
</organism>
<gene>
    <name evidence="1" type="primary">glyQ</name>
    <name type="ordered locus">PD_0840</name>
</gene>
<dbReference type="EC" id="6.1.1.14" evidence="1"/>
<dbReference type="EMBL" id="AE009442">
    <property type="protein sequence ID" value="AAO28708.1"/>
    <property type="molecule type" value="Genomic_DNA"/>
</dbReference>
<dbReference type="RefSeq" id="WP_004085463.1">
    <property type="nucleotide sequence ID" value="NC_004556.1"/>
</dbReference>
<dbReference type="SMR" id="Q87D46"/>
<dbReference type="GeneID" id="93904626"/>
<dbReference type="KEGG" id="xft:PD_0840"/>
<dbReference type="HOGENOM" id="CLU_057066_1_0_6"/>
<dbReference type="Proteomes" id="UP000002516">
    <property type="component" value="Chromosome"/>
</dbReference>
<dbReference type="GO" id="GO:0005829">
    <property type="term" value="C:cytosol"/>
    <property type="evidence" value="ECO:0007669"/>
    <property type="project" value="TreeGrafter"/>
</dbReference>
<dbReference type="GO" id="GO:0005524">
    <property type="term" value="F:ATP binding"/>
    <property type="evidence" value="ECO:0007669"/>
    <property type="project" value="UniProtKB-UniRule"/>
</dbReference>
<dbReference type="GO" id="GO:0004820">
    <property type="term" value="F:glycine-tRNA ligase activity"/>
    <property type="evidence" value="ECO:0007669"/>
    <property type="project" value="UniProtKB-UniRule"/>
</dbReference>
<dbReference type="GO" id="GO:0006426">
    <property type="term" value="P:glycyl-tRNA aminoacylation"/>
    <property type="evidence" value="ECO:0007669"/>
    <property type="project" value="UniProtKB-UniRule"/>
</dbReference>
<dbReference type="CDD" id="cd00733">
    <property type="entry name" value="GlyRS_alpha_core"/>
    <property type="match status" value="1"/>
</dbReference>
<dbReference type="FunFam" id="3.30.930.10:FF:000006">
    <property type="entry name" value="Glycine--tRNA ligase alpha subunit"/>
    <property type="match status" value="1"/>
</dbReference>
<dbReference type="Gene3D" id="3.30.930.10">
    <property type="entry name" value="Bira Bifunctional Protein, Domain 2"/>
    <property type="match status" value="1"/>
</dbReference>
<dbReference type="Gene3D" id="1.20.58.180">
    <property type="entry name" value="Class II aaRS and biotin synthetases, domain 2"/>
    <property type="match status" value="1"/>
</dbReference>
<dbReference type="HAMAP" id="MF_00254">
    <property type="entry name" value="Gly_tRNA_synth_alpha"/>
    <property type="match status" value="1"/>
</dbReference>
<dbReference type="InterPro" id="IPR045864">
    <property type="entry name" value="aa-tRNA-synth_II/BPL/LPL"/>
</dbReference>
<dbReference type="InterPro" id="IPR006194">
    <property type="entry name" value="Gly-tRNA-synth_heterodimer"/>
</dbReference>
<dbReference type="InterPro" id="IPR002310">
    <property type="entry name" value="Gly-tRNA_ligase_asu"/>
</dbReference>
<dbReference type="NCBIfam" id="TIGR00388">
    <property type="entry name" value="glyQ"/>
    <property type="match status" value="1"/>
</dbReference>
<dbReference type="NCBIfam" id="NF006827">
    <property type="entry name" value="PRK09348.1"/>
    <property type="match status" value="1"/>
</dbReference>
<dbReference type="PANTHER" id="PTHR30075:SF2">
    <property type="entry name" value="GLYCINE--TRNA LIGASE, CHLOROPLASTIC_MITOCHONDRIAL 2"/>
    <property type="match status" value="1"/>
</dbReference>
<dbReference type="PANTHER" id="PTHR30075">
    <property type="entry name" value="GLYCYL-TRNA SYNTHETASE"/>
    <property type="match status" value="1"/>
</dbReference>
<dbReference type="Pfam" id="PF02091">
    <property type="entry name" value="tRNA-synt_2e"/>
    <property type="match status" value="1"/>
</dbReference>
<dbReference type="PRINTS" id="PR01044">
    <property type="entry name" value="TRNASYNTHGA"/>
</dbReference>
<dbReference type="SUPFAM" id="SSF55681">
    <property type="entry name" value="Class II aaRS and biotin synthetases"/>
    <property type="match status" value="1"/>
</dbReference>
<dbReference type="PROSITE" id="PS50861">
    <property type="entry name" value="AA_TRNA_LIGASE_II_GLYAB"/>
    <property type="match status" value="1"/>
</dbReference>
<reference key="1">
    <citation type="journal article" date="2003" name="J. Bacteriol.">
        <title>Comparative analyses of the complete genome sequences of Pierce's disease and citrus variegated chlorosis strains of Xylella fastidiosa.</title>
        <authorList>
            <person name="Van Sluys M.A."/>
            <person name="de Oliveira M.C."/>
            <person name="Monteiro-Vitorello C.B."/>
            <person name="Miyaki C.Y."/>
            <person name="Furlan L.R."/>
            <person name="Camargo L.E.A."/>
            <person name="da Silva A.C.R."/>
            <person name="Moon D.H."/>
            <person name="Takita M.A."/>
            <person name="Lemos E.G.M."/>
            <person name="Machado M.A."/>
            <person name="Ferro M.I.T."/>
            <person name="da Silva F.R."/>
            <person name="Goldman M.H.S."/>
            <person name="Goldman G.H."/>
            <person name="Lemos M.V.F."/>
            <person name="El-Dorry H."/>
            <person name="Tsai S.M."/>
            <person name="Carrer H."/>
            <person name="Carraro D.M."/>
            <person name="de Oliveira R.C."/>
            <person name="Nunes L.R."/>
            <person name="Siqueira W.J."/>
            <person name="Coutinho L.L."/>
            <person name="Kimura E.T."/>
            <person name="Ferro E.S."/>
            <person name="Harakava R."/>
            <person name="Kuramae E.E."/>
            <person name="Marino C.L."/>
            <person name="Giglioti E."/>
            <person name="Abreu I.L."/>
            <person name="Alves L.M.C."/>
            <person name="do Amaral A.M."/>
            <person name="Baia G.S."/>
            <person name="Blanco S.R."/>
            <person name="Brito M.S."/>
            <person name="Cannavan F.S."/>
            <person name="Celestino A.V."/>
            <person name="da Cunha A.F."/>
            <person name="Fenille R.C."/>
            <person name="Ferro J.A."/>
            <person name="Formighieri E.F."/>
            <person name="Kishi L.T."/>
            <person name="Leoni S.G."/>
            <person name="Oliveira A.R."/>
            <person name="Rosa V.E. Jr."/>
            <person name="Sassaki F.T."/>
            <person name="Sena J.A.D."/>
            <person name="de Souza A.A."/>
            <person name="Truffi D."/>
            <person name="Tsukumo F."/>
            <person name="Yanai G.M."/>
            <person name="Zaros L.G."/>
            <person name="Civerolo E.L."/>
            <person name="Simpson A.J.G."/>
            <person name="Almeida N.F. Jr."/>
            <person name="Setubal J.C."/>
            <person name="Kitajima J.P."/>
        </authorList>
    </citation>
    <scope>NUCLEOTIDE SEQUENCE [LARGE SCALE GENOMIC DNA]</scope>
    <source>
        <strain>Temecula1 / ATCC 700964</strain>
    </source>
</reference>
<comment type="catalytic activity">
    <reaction evidence="1">
        <text>tRNA(Gly) + glycine + ATP = glycyl-tRNA(Gly) + AMP + diphosphate</text>
        <dbReference type="Rhea" id="RHEA:16013"/>
        <dbReference type="Rhea" id="RHEA-COMP:9664"/>
        <dbReference type="Rhea" id="RHEA-COMP:9683"/>
        <dbReference type="ChEBI" id="CHEBI:30616"/>
        <dbReference type="ChEBI" id="CHEBI:33019"/>
        <dbReference type="ChEBI" id="CHEBI:57305"/>
        <dbReference type="ChEBI" id="CHEBI:78442"/>
        <dbReference type="ChEBI" id="CHEBI:78522"/>
        <dbReference type="ChEBI" id="CHEBI:456215"/>
        <dbReference type="EC" id="6.1.1.14"/>
    </reaction>
</comment>
<comment type="subunit">
    <text evidence="1">Tetramer of two alpha and two beta subunits.</text>
</comment>
<comment type="subcellular location">
    <subcellularLocation>
        <location evidence="1">Cytoplasm</location>
    </subcellularLocation>
</comment>
<comment type="similarity">
    <text evidence="1">Belongs to the class-II aminoacyl-tRNA synthetase family.</text>
</comment>
<proteinExistence type="inferred from homology"/>
<protein>
    <recommendedName>
        <fullName evidence="1">Glycine--tRNA ligase alpha subunit</fullName>
        <ecNumber evidence="1">6.1.1.14</ecNumber>
    </recommendedName>
    <alternativeName>
        <fullName evidence="1">Glycyl-tRNA synthetase alpha subunit</fullName>
        <shortName evidence="1">GlyRS</shortName>
    </alternativeName>
</protein>